<sequence length="224" mass="25621">MDYTLTRIDPNGENDRYPLQKQEIVTDPLEKHVYQNVYMGKLEHALHDMVNWGRKNSLWPFNFGLSCCYVEMTTSFTAVHDVARFGSEVIRASPRQADFMVVAGTCFTKMAPVVQRLYDQMLEPKWVISMGACANSGGMYDIYSVVQGVDKFLPVDVYIPGCPPRPEAYMQALLLLQESIGKERRPLSWVVNDQGVYRANMQSERDRKNAERIAVTNLRTPDEI</sequence>
<protein>
    <recommendedName>
        <fullName evidence="1">NADH-quinone oxidoreductase subunit B</fullName>
        <ecNumber evidence="1">7.1.1.-</ecNumber>
    </recommendedName>
    <alternativeName>
        <fullName evidence="1">NADH dehydrogenase I subunit B</fullName>
    </alternativeName>
    <alternativeName>
        <fullName evidence="1">NDH-1 subunit B</fullName>
    </alternativeName>
</protein>
<comment type="function">
    <text evidence="1">NDH-1 shuttles electrons from NADH, via FMN and iron-sulfur (Fe-S) centers, to quinones in the respiratory chain. The immediate electron acceptor for the enzyme in this species is believed to be ubiquinone. Couples the redox reaction to proton translocation (for every two electrons transferred, four hydrogen ions are translocated across the cytoplasmic membrane), and thus conserves the redox energy in a proton gradient.</text>
</comment>
<comment type="catalytic activity">
    <reaction evidence="1">
        <text>a quinone + NADH + 5 H(+)(in) = a quinol + NAD(+) + 4 H(+)(out)</text>
        <dbReference type="Rhea" id="RHEA:57888"/>
        <dbReference type="ChEBI" id="CHEBI:15378"/>
        <dbReference type="ChEBI" id="CHEBI:24646"/>
        <dbReference type="ChEBI" id="CHEBI:57540"/>
        <dbReference type="ChEBI" id="CHEBI:57945"/>
        <dbReference type="ChEBI" id="CHEBI:132124"/>
    </reaction>
</comment>
<comment type="cofactor">
    <cofactor evidence="1">
        <name>[4Fe-4S] cluster</name>
        <dbReference type="ChEBI" id="CHEBI:49883"/>
    </cofactor>
    <text evidence="1">Binds 1 [4Fe-4S] cluster.</text>
</comment>
<comment type="subunit">
    <text evidence="1">NDH-1 is composed of 13 different subunits. Subunits NuoB, CD, E, F, and G constitute the peripheral sector of the complex.</text>
</comment>
<comment type="subcellular location">
    <subcellularLocation>
        <location evidence="1">Cell inner membrane</location>
        <topology evidence="1">Peripheral membrane protein</topology>
        <orientation evidence="1">Cytoplasmic side</orientation>
    </subcellularLocation>
</comment>
<comment type="similarity">
    <text evidence="1">Belongs to the complex I 20 kDa subunit family.</text>
</comment>
<organism>
    <name type="scientific">Erwinia tasmaniensis (strain DSM 17950 / CFBP 7177 / CIP 109463 / NCPPB 4357 / Et1/99)</name>
    <dbReference type="NCBI Taxonomy" id="465817"/>
    <lineage>
        <taxon>Bacteria</taxon>
        <taxon>Pseudomonadati</taxon>
        <taxon>Pseudomonadota</taxon>
        <taxon>Gammaproteobacteria</taxon>
        <taxon>Enterobacterales</taxon>
        <taxon>Erwiniaceae</taxon>
        <taxon>Erwinia</taxon>
    </lineage>
</organism>
<keyword id="KW-0004">4Fe-4S</keyword>
<keyword id="KW-0997">Cell inner membrane</keyword>
<keyword id="KW-1003">Cell membrane</keyword>
<keyword id="KW-0408">Iron</keyword>
<keyword id="KW-0411">Iron-sulfur</keyword>
<keyword id="KW-0472">Membrane</keyword>
<keyword id="KW-0479">Metal-binding</keyword>
<keyword id="KW-0520">NAD</keyword>
<keyword id="KW-0874">Quinone</keyword>
<keyword id="KW-1185">Reference proteome</keyword>
<keyword id="KW-1278">Translocase</keyword>
<keyword id="KW-0813">Transport</keyword>
<keyword id="KW-0830">Ubiquinone</keyword>
<name>NUOB_ERWT9</name>
<reference key="1">
    <citation type="journal article" date="2008" name="Environ. Microbiol.">
        <title>The genome of Erwinia tasmaniensis strain Et1/99, a non-pathogenic bacterium in the genus Erwinia.</title>
        <authorList>
            <person name="Kube M."/>
            <person name="Migdoll A.M."/>
            <person name="Mueller I."/>
            <person name="Kuhl H."/>
            <person name="Beck A."/>
            <person name="Reinhardt R."/>
            <person name="Geider K."/>
        </authorList>
    </citation>
    <scope>NUCLEOTIDE SEQUENCE [LARGE SCALE GENOMIC DNA]</scope>
    <source>
        <strain>DSM 17950 / CFBP 7177 / CIP 109463 / NCPPB 4357 / Et1/99</strain>
    </source>
</reference>
<evidence type="ECO:0000255" key="1">
    <source>
        <dbReference type="HAMAP-Rule" id="MF_01356"/>
    </source>
</evidence>
<accession>B2VIV4</accession>
<dbReference type="EC" id="7.1.1.-" evidence="1"/>
<dbReference type="EMBL" id="CU468135">
    <property type="protein sequence ID" value="CAO96251.1"/>
    <property type="molecule type" value="Genomic_DNA"/>
</dbReference>
<dbReference type="RefSeq" id="WP_012440948.1">
    <property type="nucleotide sequence ID" value="NC_010694.1"/>
</dbReference>
<dbReference type="SMR" id="B2VIV4"/>
<dbReference type="STRING" id="465817.ETA_12050"/>
<dbReference type="KEGG" id="eta:ETA_12050"/>
<dbReference type="eggNOG" id="COG0377">
    <property type="taxonomic scope" value="Bacteria"/>
</dbReference>
<dbReference type="HOGENOM" id="CLU_055737_7_3_6"/>
<dbReference type="OrthoDB" id="9786737at2"/>
<dbReference type="Proteomes" id="UP000001726">
    <property type="component" value="Chromosome"/>
</dbReference>
<dbReference type="GO" id="GO:0005886">
    <property type="term" value="C:plasma membrane"/>
    <property type="evidence" value="ECO:0007669"/>
    <property type="project" value="UniProtKB-SubCell"/>
</dbReference>
<dbReference type="GO" id="GO:0045271">
    <property type="term" value="C:respiratory chain complex I"/>
    <property type="evidence" value="ECO:0007669"/>
    <property type="project" value="TreeGrafter"/>
</dbReference>
<dbReference type="GO" id="GO:0051539">
    <property type="term" value="F:4 iron, 4 sulfur cluster binding"/>
    <property type="evidence" value="ECO:0007669"/>
    <property type="project" value="UniProtKB-KW"/>
</dbReference>
<dbReference type="GO" id="GO:0005506">
    <property type="term" value="F:iron ion binding"/>
    <property type="evidence" value="ECO:0007669"/>
    <property type="project" value="UniProtKB-UniRule"/>
</dbReference>
<dbReference type="GO" id="GO:0008137">
    <property type="term" value="F:NADH dehydrogenase (ubiquinone) activity"/>
    <property type="evidence" value="ECO:0007669"/>
    <property type="project" value="InterPro"/>
</dbReference>
<dbReference type="GO" id="GO:0050136">
    <property type="term" value="F:NADH:ubiquinone reductase (non-electrogenic) activity"/>
    <property type="evidence" value="ECO:0007669"/>
    <property type="project" value="UniProtKB-UniRule"/>
</dbReference>
<dbReference type="GO" id="GO:0048038">
    <property type="term" value="F:quinone binding"/>
    <property type="evidence" value="ECO:0007669"/>
    <property type="project" value="UniProtKB-KW"/>
</dbReference>
<dbReference type="GO" id="GO:0009060">
    <property type="term" value="P:aerobic respiration"/>
    <property type="evidence" value="ECO:0007669"/>
    <property type="project" value="TreeGrafter"/>
</dbReference>
<dbReference type="GO" id="GO:0015990">
    <property type="term" value="P:electron transport coupled proton transport"/>
    <property type="evidence" value="ECO:0007669"/>
    <property type="project" value="TreeGrafter"/>
</dbReference>
<dbReference type="FunFam" id="3.40.50.12280:FF:000002">
    <property type="entry name" value="NADH-quinone oxidoreductase subunit B"/>
    <property type="match status" value="1"/>
</dbReference>
<dbReference type="Gene3D" id="3.40.50.12280">
    <property type="match status" value="1"/>
</dbReference>
<dbReference type="HAMAP" id="MF_01356">
    <property type="entry name" value="NDH1_NuoB"/>
    <property type="match status" value="1"/>
</dbReference>
<dbReference type="InterPro" id="IPR006137">
    <property type="entry name" value="NADH_UbQ_OxRdtase-like_20kDa"/>
</dbReference>
<dbReference type="InterPro" id="IPR006138">
    <property type="entry name" value="NADH_UQ_OxRdtase_20Kd_su"/>
</dbReference>
<dbReference type="NCBIfam" id="TIGR01957">
    <property type="entry name" value="nuoB_fam"/>
    <property type="match status" value="1"/>
</dbReference>
<dbReference type="NCBIfam" id="NF005012">
    <property type="entry name" value="PRK06411.1"/>
    <property type="match status" value="1"/>
</dbReference>
<dbReference type="PANTHER" id="PTHR11995">
    <property type="entry name" value="NADH DEHYDROGENASE"/>
    <property type="match status" value="1"/>
</dbReference>
<dbReference type="PANTHER" id="PTHR11995:SF14">
    <property type="entry name" value="NADH DEHYDROGENASE [UBIQUINONE] IRON-SULFUR PROTEIN 7, MITOCHONDRIAL"/>
    <property type="match status" value="1"/>
</dbReference>
<dbReference type="Pfam" id="PF01058">
    <property type="entry name" value="Oxidored_q6"/>
    <property type="match status" value="1"/>
</dbReference>
<dbReference type="SUPFAM" id="SSF56770">
    <property type="entry name" value="HydA/Nqo6-like"/>
    <property type="match status" value="1"/>
</dbReference>
<dbReference type="PROSITE" id="PS01150">
    <property type="entry name" value="COMPLEX1_20K"/>
    <property type="match status" value="1"/>
</dbReference>
<gene>
    <name evidence="1" type="primary">nuoB</name>
    <name type="ordered locus">ETA_12050</name>
</gene>
<proteinExistence type="inferred from homology"/>
<feature type="chain" id="PRO_0000376205" description="NADH-quinone oxidoreductase subunit B">
    <location>
        <begin position="1"/>
        <end position="224"/>
    </location>
</feature>
<feature type="binding site" evidence="1">
    <location>
        <position position="67"/>
    </location>
    <ligand>
        <name>[4Fe-4S] cluster</name>
        <dbReference type="ChEBI" id="CHEBI:49883"/>
    </ligand>
</feature>
<feature type="binding site" evidence="1">
    <location>
        <position position="68"/>
    </location>
    <ligand>
        <name>[4Fe-4S] cluster</name>
        <dbReference type="ChEBI" id="CHEBI:49883"/>
    </ligand>
</feature>
<feature type="binding site" evidence="1">
    <location>
        <position position="133"/>
    </location>
    <ligand>
        <name>[4Fe-4S] cluster</name>
        <dbReference type="ChEBI" id="CHEBI:49883"/>
    </ligand>
</feature>
<feature type="binding site" evidence="1">
    <location>
        <position position="162"/>
    </location>
    <ligand>
        <name>[4Fe-4S] cluster</name>
        <dbReference type="ChEBI" id="CHEBI:49883"/>
    </ligand>
</feature>